<name>GLT1_WHEAT</name>
<reference key="1">
    <citation type="journal article" date="1983" name="FEBS Lett.">
        <title>Identification of barley and wheat cDNA clones related to the high-M-r polypeptides of wheat gluten.</title>
        <authorList>
            <person name="Forde J."/>
            <person name="Forde B.G."/>
            <person name="Fry R.P."/>
            <person name="Kreis M."/>
            <person name="Shewry P.R."/>
            <person name="Miflin B.J."/>
        </authorList>
    </citation>
    <scope>NUCLEOTIDE SEQUENCE [MRNA]</scope>
</reference>
<evidence type="ECO:0000256" key="1">
    <source>
        <dbReference type="SAM" id="MobiDB-lite"/>
    </source>
</evidence>
<evidence type="ECO:0000305" key="2"/>
<dbReference type="EMBL" id="X00054">
    <property type="protein sequence ID" value="CAA24933.1"/>
    <property type="molecule type" value="mRNA"/>
</dbReference>
<dbReference type="PIR" id="A03352">
    <property type="entry name" value="EEWT1"/>
</dbReference>
<dbReference type="STRING" id="4565.P02861"/>
<dbReference type="Proteomes" id="UP000019116">
    <property type="component" value="Unplaced"/>
</dbReference>
<dbReference type="GO" id="GO:0045735">
    <property type="term" value="F:nutrient reservoir activity"/>
    <property type="evidence" value="ECO:0007669"/>
    <property type="project" value="UniProtKB-KW"/>
</dbReference>
<dbReference type="InterPro" id="IPR001419">
    <property type="entry name" value="Glutenin"/>
</dbReference>
<dbReference type="Pfam" id="PF03157">
    <property type="entry name" value="Glutenin_hmw"/>
    <property type="match status" value="1"/>
</dbReference>
<dbReference type="PRINTS" id="PR00210">
    <property type="entry name" value="GLUTENIN"/>
</dbReference>
<sequence>EKLGQGQQPRQWLQPRQGQQGYYPTSPQQSGQGQQLGQGQQGYYPTSPQQSGQGQQGYDSPYHVSAEHQAASLKVAKAQQLAAQLPAMCRLEGGDALLASQ</sequence>
<organism>
    <name type="scientific">Triticum aestivum</name>
    <name type="common">Wheat</name>
    <dbReference type="NCBI Taxonomy" id="4565"/>
    <lineage>
        <taxon>Eukaryota</taxon>
        <taxon>Viridiplantae</taxon>
        <taxon>Streptophyta</taxon>
        <taxon>Embryophyta</taxon>
        <taxon>Tracheophyta</taxon>
        <taxon>Spermatophyta</taxon>
        <taxon>Magnoliopsida</taxon>
        <taxon>Liliopsida</taxon>
        <taxon>Poales</taxon>
        <taxon>Poaceae</taxon>
        <taxon>BOP clade</taxon>
        <taxon>Pooideae</taxon>
        <taxon>Triticodae</taxon>
        <taxon>Triticeae</taxon>
        <taxon>Triticinae</taxon>
        <taxon>Triticum</taxon>
    </lineage>
</organism>
<comment type="function">
    <text>Glutenins are high-molecular weight seed storage proteins of wheat endosperm. Thought to be responsible for the visco-elastic property of wheat dough.</text>
</comment>
<comment type="subunit">
    <text>Disulfide-bridge linked aggregates.</text>
</comment>
<comment type="miscellaneous">
    <text>Glutenins are coded by several genes on each of the group 1 chromosomes of wheat.</text>
</comment>
<comment type="similarity">
    <text evidence="2">Belongs to the gliadin/glutenin family.</text>
</comment>
<accession>P02861</accession>
<protein>
    <recommendedName>
        <fullName>Glutenin, high molecular weight subunit PC256</fullName>
    </recommendedName>
</protein>
<keyword id="KW-1015">Disulfide bond</keyword>
<keyword id="KW-1185">Reference proteome</keyword>
<keyword id="KW-0677">Repeat</keyword>
<keyword id="KW-0708">Seed storage protein</keyword>
<keyword id="KW-0758">Storage protein</keyword>
<proteinExistence type="evidence at transcript level"/>
<feature type="chain" id="PRO_0000102592" description="Glutenin, high molecular weight subunit PC256">
    <location>
        <begin position="1" status="less than"/>
        <end position="101"/>
    </location>
</feature>
<feature type="region of interest" description="Disordered" evidence="1">
    <location>
        <begin position="1"/>
        <end position="65"/>
    </location>
</feature>
<feature type="compositionally biased region" description="Polar residues" evidence="1">
    <location>
        <begin position="1"/>
        <end position="27"/>
    </location>
</feature>
<feature type="compositionally biased region" description="Low complexity" evidence="1">
    <location>
        <begin position="41"/>
        <end position="62"/>
    </location>
</feature>
<feature type="non-terminal residue">
    <location>
        <position position="1"/>
    </location>
</feature>